<keyword id="KW-0472">Membrane</keyword>
<keyword id="KW-1185">Reference proteome</keyword>
<keyword id="KW-0735">Signal-anchor</keyword>
<keyword id="KW-0812">Transmembrane</keyword>
<keyword id="KW-1133">Transmembrane helix</keyword>
<feature type="chain" id="PRO_0000425374" description="Protein trichome birefringence-like 8">
    <location>
        <begin position="1"/>
        <end position="427"/>
    </location>
</feature>
<feature type="transmembrane region" description="Helical; Signal-anchor for type II membrane protein" evidence="3">
    <location>
        <begin position="31"/>
        <end position="51"/>
    </location>
</feature>
<feature type="short sequence motif" description="GDS motif">
    <location>
        <begin position="155"/>
        <end position="157"/>
    </location>
</feature>
<feature type="short sequence motif" description="DCXHWCLPGXXDXWN motif">
    <location>
        <begin position="398"/>
        <end position="412"/>
    </location>
</feature>
<gene>
    <name type="primary">TBL8</name>
    <name type="ordered locus">At3g11570</name>
    <name type="ORF">Q9CAX1</name>
</gene>
<reference key="1">
    <citation type="journal article" date="2000" name="Nature">
        <title>Sequence and analysis of chromosome 3 of the plant Arabidopsis thaliana.</title>
        <authorList>
            <person name="Salanoubat M."/>
            <person name="Lemcke K."/>
            <person name="Rieger M."/>
            <person name="Ansorge W."/>
            <person name="Unseld M."/>
            <person name="Fartmann B."/>
            <person name="Valle G."/>
            <person name="Bloecker H."/>
            <person name="Perez-Alonso M."/>
            <person name="Obermaier B."/>
            <person name="Delseny M."/>
            <person name="Boutry M."/>
            <person name="Grivell L.A."/>
            <person name="Mache R."/>
            <person name="Puigdomenech P."/>
            <person name="De Simone V."/>
            <person name="Choisne N."/>
            <person name="Artiguenave F."/>
            <person name="Robert C."/>
            <person name="Brottier P."/>
            <person name="Wincker P."/>
            <person name="Cattolico L."/>
            <person name="Weissenbach J."/>
            <person name="Saurin W."/>
            <person name="Quetier F."/>
            <person name="Schaefer M."/>
            <person name="Mueller-Auer S."/>
            <person name="Gabel C."/>
            <person name="Fuchs M."/>
            <person name="Benes V."/>
            <person name="Wurmbach E."/>
            <person name="Drzonek H."/>
            <person name="Erfle H."/>
            <person name="Jordan N."/>
            <person name="Bangert S."/>
            <person name="Wiedelmann R."/>
            <person name="Kranz H."/>
            <person name="Voss H."/>
            <person name="Holland R."/>
            <person name="Brandt P."/>
            <person name="Nyakatura G."/>
            <person name="Vezzi A."/>
            <person name="D'Angelo M."/>
            <person name="Pallavicini A."/>
            <person name="Toppo S."/>
            <person name="Simionati B."/>
            <person name="Conrad A."/>
            <person name="Hornischer K."/>
            <person name="Kauer G."/>
            <person name="Loehnert T.-H."/>
            <person name="Nordsiek G."/>
            <person name="Reichelt J."/>
            <person name="Scharfe M."/>
            <person name="Schoen O."/>
            <person name="Bargues M."/>
            <person name="Terol J."/>
            <person name="Climent J."/>
            <person name="Navarro P."/>
            <person name="Collado C."/>
            <person name="Perez-Perez A."/>
            <person name="Ottenwaelder B."/>
            <person name="Duchemin D."/>
            <person name="Cooke R."/>
            <person name="Laudie M."/>
            <person name="Berger-Llauro C."/>
            <person name="Purnelle B."/>
            <person name="Masuy D."/>
            <person name="de Haan M."/>
            <person name="Maarse A.C."/>
            <person name="Alcaraz J.-P."/>
            <person name="Cottet A."/>
            <person name="Casacuberta E."/>
            <person name="Monfort A."/>
            <person name="Argiriou A."/>
            <person name="Flores M."/>
            <person name="Liguori R."/>
            <person name="Vitale D."/>
            <person name="Mannhaupt G."/>
            <person name="Haase D."/>
            <person name="Schoof H."/>
            <person name="Rudd S."/>
            <person name="Zaccaria P."/>
            <person name="Mewes H.-W."/>
            <person name="Mayer K.F.X."/>
            <person name="Kaul S."/>
            <person name="Town C.D."/>
            <person name="Koo H.L."/>
            <person name="Tallon L.J."/>
            <person name="Jenkins J."/>
            <person name="Rooney T."/>
            <person name="Rizzo M."/>
            <person name="Walts A."/>
            <person name="Utterback T."/>
            <person name="Fujii C.Y."/>
            <person name="Shea T.P."/>
            <person name="Creasy T.H."/>
            <person name="Haas B."/>
            <person name="Maiti R."/>
            <person name="Wu D."/>
            <person name="Peterson J."/>
            <person name="Van Aken S."/>
            <person name="Pai G."/>
            <person name="Militscher J."/>
            <person name="Sellers P."/>
            <person name="Gill J.E."/>
            <person name="Feldblyum T.V."/>
            <person name="Preuss D."/>
            <person name="Lin X."/>
            <person name="Nierman W.C."/>
            <person name="Salzberg S.L."/>
            <person name="White O."/>
            <person name="Venter J.C."/>
            <person name="Fraser C.M."/>
            <person name="Kaneko T."/>
            <person name="Nakamura Y."/>
            <person name="Sato S."/>
            <person name="Kato T."/>
            <person name="Asamizu E."/>
            <person name="Sasamoto S."/>
            <person name="Kimura T."/>
            <person name="Idesawa K."/>
            <person name="Kawashima K."/>
            <person name="Kishida Y."/>
            <person name="Kiyokawa C."/>
            <person name="Kohara M."/>
            <person name="Matsumoto M."/>
            <person name="Matsuno A."/>
            <person name="Muraki A."/>
            <person name="Nakayama S."/>
            <person name="Nakazaki N."/>
            <person name="Shinpo S."/>
            <person name="Takeuchi C."/>
            <person name="Wada T."/>
            <person name="Watanabe A."/>
            <person name="Yamada M."/>
            <person name="Yasuda M."/>
            <person name="Tabata S."/>
        </authorList>
    </citation>
    <scope>NUCLEOTIDE SEQUENCE [LARGE SCALE GENOMIC DNA]</scope>
    <source>
        <strain>cv. Columbia</strain>
    </source>
</reference>
<reference key="2">
    <citation type="journal article" date="2017" name="Plant J.">
        <title>Araport11: a complete reannotation of the Arabidopsis thaliana reference genome.</title>
        <authorList>
            <person name="Cheng C.Y."/>
            <person name="Krishnakumar V."/>
            <person name="Chan A.P."/>
            <person name="Thibaud-Nissen F."/>
            <person name="Schobel S."/>
            <person name="Town C.D."/>
        </authorList>
    </citation>
    <scope>GENOME REANNOTATION</scope>
    <source>
        <strain>cv. Columbia</strain>
    </source>
</reference>
<reference key="3">
    <citation type="submission" date="2005-03" db="EMBL/GenBank/DDBJ databases">
        <title>Large-scale analysis of RIKEN Arabidopsis full-length (RAFL) cDNAs.</title>
        <authorList>
            <person name="Totoki Y."/>
            <person name="Seki M."/>
            <person name="Ishida J."/>
            <person name="Nakajima M."/>
            <person name="Enju A."/>
            <person name="Kamiya A."/>
            <person name="Narusaka M."/>
            <person name="Shin-i T."/>
            <person name="Nakagawa M."/>
            <person name="Sakamoto N."/>
            <person name="Oishi K."/>
            <person name="Kohara Y."/>
            <person name="Kobayashi M."/>
            <person name="Toyoda A."/>
            <person name="Sakaki Y."/>
            <person name="Sakurai T."/>
            <person name="Iida K."/>
            <person name="Akiyama K."/>
            <person name="Satou M."/>
            <person name="Toyoda T."/>
            <person name="Konagaya A."/>
            <person name="Carninci P."/>
            <person name="Kawai J."/>
            <person name="Hayashizaki Y."/>
            <person name="Shinozaki K."/>
        </authorList>
    </citation>
    <scope>NUCLEOTIDE SEQUENCE [LARGE SCALE MRNA] OF 11-427</scope>
    <source>
        <strain>cv. Columbia</strain>
    </source>
</reference>
<reference key="4">
    <citation type="journal article" date="2007" name="Plant J.">
        <title>Arabidopsis ESK1 encodes a novel regulator of freezing tolerance.</title>
        <authorList>
            <person name="Xin Z."/>
            <person name="Mandaokar A."/>
            <person name="Chen J."/>
            <person name="Last R.L."/>
            <person name="Browse J."/>
        </authorList>
    </citation>
    <scope>GENE FAMILY</scope>
    <source>
        <strain>cv. Columbia</strain>
    </source>
</reference>
<reference key="5">
    <citation type="journal article" date="2010" name="Plant Physiol.">
        <title>TRICHOME BIREFRINGENCE and its homolog AT5G01360 encode plant-specific DUF231 proteins required for cellulose biosynthesis in Arabidopsis.</title>
        <authorList>
            <person name="Bischoff V."/>
            <person name="Nita S."/>
            <person name="Neumetzler L."/>
            <person name="Schindelasch D."/>
            <person name="Urbain A."/>
            <person name="Eshed R."/>
            <person name="Persson S."/>
            <person name="Delmer D."/>
            <person name="Scheible W.R."/>
        </authorList>
    </citation>
    <scope>GENE FAMILY</scope>
    <scope>NOMENCLATURE</scope>
</reference>
<reference key="6">
    <citation type="journal article" date="2010" name="Plant Signal. Behav.">
        <title>Involvement of TBL/DUF231 proteins into cell wall biology.</title>
        <authorList>
            <person name="Bischoff V."/>
            <person name="Selbig J."/>
            <person name="Scheible W.R."/>
        </authorList>
    </citation>
    <scope>3D-STRUCTURE MODELING</scope>
</reference>
<evidence type="ECO:0000250" key="1">
    <source>
        <dbReference type="UniProtKB" id="Q9FG35"/>
    </source>
</evidence>
<evidence type="ECO:0000250" key="2">
    <source>
        <dbReference type="UniProtKB" id="Q9LY46"/>
    </source>
</evidence>
<evidence type="ECO:0000255" key="3"/>
<evidence type="ECO:0000305" key="4"/>
<evidence type="ECO:0000305" key="5">
    <source>
    </source>
</evidence>
<dbReference type="EMBL" id="AC008153">
    <property type="protein sequence ID" value="AAG51447.1"/>
    <property type="molecule type" value="Genomic_DNA"/>
</dbReference>
<dbReference type="EMBL" id="CP002686">
    <property type="protein sequence ID" value="AEE75067.1"/>
    <property type="molecule type" value="Genomic_DNA"/>
</dbReference>
<dbReference type="EMBL" id="AK176339">
    <property type="protein sequence ID" value="BAD44102.1"/>
    <property type="molecule type" value="mRNA"/>
</dbReference>
<dbReference type="EMBL" id="AK176371">
    <property type="protein sequence ID" value="BAD44134.1"/>
    <property type="molecule type" value="mRNA"/>
</dbReference>
<dbReference type="EMBL" id="AK176559">
    <property type="protein sequence ID" value="BAD44322.1"/>
    <property type="molecule type" value="mRNA"/>
</dbReference>
<dbReference type="EMBL" id="AK222184">
    <property type="protein sequence ID" value="BAD95318.1"/>
    <property type="molecule type" value="mRNA"/>
</dbReference>
<dbReference type="RefSeq" id="NP_187764.1">
    <property type="nucleotide sequence ID" value="NM_111990.3"/>
</dbReference>
<dbReference type="SMR" id="Q9CAX1"/>
<dbReference type="FunCoup" id="Q9CAX1">
    <property type="interactions" value="2"/>
</dbReference>
<dbReference type="STRING" id="3702.Q9CAX1"/>
<dbReference type="PaxDb" id="3702-AT3G11570.1"/>
<dbReference type="ProteomicsDB" id="232990"/>
<dbReference type="EnsemblPlants" id="AT3G11570.1">
    <property type="protein sequence ID" value="AT3G11570.1"/>
    <property type="gene ID" value="AT3G11570"/>
</dbReference>
<dbReference type="GeneID" id="820330"/>
<dbReference type="Gramene" id="AT3G11570.1">
    <property type="protein sequence ID" value="AT3G11570.1"/>
    <property type="gene ID" value="AT3G11570"/>
</dbReference>
<dbReference type="KEGG" id="ath:AT3G11570"/>
<dbReference type="Araport" id="AT3G11570"/>
<dbReference type="TAIR" id="AT3G11570">
    <property type="gene designation" value="TBL8"/>
</dbReference>
<dbReference type="eggNOG" id="ENOG502QSSZ">
    <property type="taxonomic scope" value="Eukaryota"/>
</dbReference>
<dbReference type="HOGENOM" id="CLU_020953_0_2_1"/>
<dbReference type="InParanoid" id="Q9CAX1"/>
<dbReference type="OMA" id="ITYMTGM"/>
<dbReference type="OrthoDB" id="630188at2759"/>
<dbReference type="PhylomeDB" id="Q9CAX1"/>
<dbReference type="PRO" id="PR:Q9CAX1"/>
<dbReference type="Proteomes" id="UP000006548">
    <property type="component" value="Chromosome 3"/>
</dbReference>
<dbReference type="ExpressionAtlas" id="Q9CAX1">
    <property type="expression patterns" value="baseline and differential"/>
</dbReference>
<dbReference type="GO" id="GO:0016020">
    <property type="term" value="C:membrane"/>
    <property type="evidence" value="ECO:0007669"/>
    <property type="project" value="UniProtKB-SubCell"/>
</dbReference>
<dbReference type="GO" id="GO:0016413">
    <property type="term" value="F:O-acetyltransferase activity"/>
    <property type="evidence" value="ECO:0007669"/>
    <property type="project" value="InterPro"/>
</dbReference>
<dbReference type="InterPro" id="IPR029962">
    <property type="entry name" value="TBL"/>
</dbReference>
<dbReference type="InterPro" id="IPR026057">
    <property type="entry name" value="TBL_C"/>
</dbReference>
<dbReference type="InterPro" id="IPR025846">
    <property type="entry name" value="TBL_N"/>
</dbReference>
<dbReference type="PANTHER" id="PTHR32285:SF210">
    <property type="entry name" value="PROTEIN TRICHOME BIREFRINGENCE-LIKE 8"/>
    <property type="match status" value="1"/>
</dbReference>
<dbReference type="PANTHER" id="PTHR32285">
    <property type="entry name" value="PROTEIN TRICHOME BIREFRINGENCE-LIKE 9-RELATED"/>
    <property type="match status" value="1"/>
</dbReference>
<dbReference type="Pfam" id="PF13839">
    <property type="entry name" value="PC-Esterase"/>
    <property type="match status" value="1"/>
</dbReference>
<dbReference type="Pfam" id="PF14416">
    <property type="entry name" value="PMR5N"/>
    <property type="match status" value="1"/>
</dbReference>
<sequence length="427" mass="49853">MDHHQESNPLKEIFSLSSSPFFSTLKIKKHIFVGISLLITFLIFSVIVVDLAGFEPHLCFGFLLSPRTLTKERGNDDVCDYSYGRWVRRRRDVDETSYYGEECRFLDPGFRCLNNGRKDSGFRQWRWQPHGCDLPRFNASDFLERSRNGRIVFVGDSIGRNQWESLLCMLSQAVSNKSEIYEVNGNPISKHKGFLSMRFPEQNLTVEYHRTPFLVVVGRPPENSPVDVKMTVRVDEFNWQSKKWVGSDVLVFNTGHWWNEDKTFIAGCYFQEGGKLNKTMGVMEGFEKSLKTWKSWVLERLDSERSHVFFRSFSPVHYRNGTWNLGGLCDADTEPETDMKKMEPDPIHNNYISQAIQEMRYEHSKVKFLNITYLTEFRKDAHPSRYREPGTPEDAPQDCSHWCLPGVPDTWNEILYAQLLAMNYRTK</sequence>
<accession>Q9CAX1</accession>
<accession>Q67YU7</accession>
<organism>
    <name type="scientific">Arabidopsis thaliana</name>
    <name type="common">Mouse-ear cress</name>
    <dbReference type="NCBI Taxonomy" id="3702"/>
    <lineage>
        <taxon>Eukaryota</taxon>
        <taxon>Viridiplantae</taxon>
        <taxon>Streptophyta</taxon>
        <taxon>Embryophyta</taxon>
        <taxon>Tracheophyta</taxon>
        <taxon>Spermatophyta</taxon>
        <taxon>Magnoliopsida</taxon>
        <taxon>eudicotyledons</taxon>
        <taxon>Gunneridae</taxon>
        <taxon>Pentapetalae</taxon>
        <taxon>rosids</taxon>
        <taxon>malvids</taxon>
        <taxon>Brassicales</taxon>
        <taxon>Brassicaceae</taxon>
        <taxon>Camelineae</taxon>
        <taxon>Arabidopsis</taxon>
    </lineage>
</organism>
<proteinExistence type="evidence at transcript level"/>
<protein>
    <recommendedName>
        <fullName>Protein trichome birefringence-like 8</fullName>
    </recommendedName>
</protein>
<comment type="function">
    <text evidence="1 2">May act as a bridging protein that binds pectin and other cell wall polysaccharides. Probably involved in maintaining esterification of pectins (By similarity). May be involved in the specific O-acetylation of cell wall polymers (By similarity).</text>
</comment>
<comment type="subcellular location">
    <subcellularLocation>
        <location evidence="4">Membrane</location>
        <topology evidence="4">Single-pass type II membrane protein</topology>
    </subcellularLocation>
</comment>
<comment type="miscellaneous">
    <text evidence="5">Contains 2 motifs that are conserved in esterases, but it is unlikely that this protein belongs to the catalytically active pectin esterases.</text>
</comment>
<comment type="similarity">
    <text evidence="4">Belongs to the PC-esterase family. TBL subfamily.</text>
</comment>
<name>TBL8_ARATH</name>